<protein>
    <recommendedName>
        <fullName>MAP kinase phosphatase with leucine-rich repeats protein 3</fullName>
        <ecNumber>3.1.3.16</ecNumber>
        <ecNumber>3.1.3.48</ecNumber>
    </recommendedName>
</protein>
<name>MPL3_DICDI</name>
<comment type="function">
    <text evidence="1">Probable phosphatase with dual specificity toward Ser/Thr and Tyr-containing proteins.</text>
</comment>
<comment type="catalytic activity">
    <reaction evidence="4">
        <text>O-phospho-L-tyrosyl-[protein] + H2O = L-tyrosyl-[protein] + phosphate</text>
        <dbReference type="Rhea" id="RHEA:10684"/>
        <dbReference type="Rhea" id="RHEA-COMP:10136"/>
        <dbReference type="Rhea" id="RHEA-COMP:20101"/>
        <dbReference type="ChEBI" id="CHEBI:15377"/>
        <dbReference type="ChEBI" id="CHEBI:43474"/>
        <dbReference type="ChEBI" id="CHEBI:46858"/>
        <dbReference type="ChEBI" id="CHEBI:61978"/>
        <dbReference type="EC" id="3.1.3.48"/>
    </reaction>
</comment>
<comment type="catalytic activity">
    <reaction>
        <text>O-phospho-L-seryl-[protein] + H2O = L-seryl-[protein] + phosphate</text>
        <dbReference type="Rhea" id="RHEA:20629"/>
        <dbReference type="Rhea" id="RHEA-COMP:9863"/>
        <dbReference type="Rhea" id="RHEA-COMP:11604"/>
        <dbReference type="ChEBI" id="CHEBI:15377"/>
        <dbReference type="ChEBI" id="CHEBI:29999"/>
        <dbReference type="ChEBI" id="CHEBI:43474"/>
        <dbReference type="ChEBI" id="CHEBI:83421"/>
        <dbReference type="EC" id="3.1.3.16"/>
    </reaction>
</comment>
<comment type="catalytic activity">
    <reaction>
        <text>O-phospho-L-threonyl-[protein] + H2O = L-threonyl-[protein] + phosphate</text>
        <dbReference type="Rhea" id="RHEA:47004"/>
        <dbReference type="Rhea" id="RHEA-COMP:11060"/>
        <dbReference type="Rhea" id="RHEA-COMP:11605"/>
        <dbReference type="ChEBI" id="CHEBI:15377"/>
        <dbReference type="ChEBI" id="CHEBI:30013"/>
        <dbReference type="ChEBI" id="CHEBI:43474"/>
        <dbReference type="ChEBI" id="CHEBI:61977"/>
        <dbReference type="EC" id="3.1.3.16"/>
    </reaction>
</comment>
<comment type="similarity">
    <text evidence="6">Belongs to the protein-tyrosine phosphatase family. Non-receptor class dual specificity subfamily.</text>
</comment>
<reference key="1">
    <citation type="journal article" date="2005" name="Nature">
        <title>The genome of the social amoeba Dictyostelium discoideum.</title>
        <authorList>
            <person name="Eichinger L."/>
            <person name="Pachebat J.A."/>
            <person name="Gloeckner G."/>
            <person name="Rajandream M.A."/>
            <person name="Sucgang R."/>
            <person name="Berriman M."/>
            <person name="Song J."/>
            <person name="Olsen R."/>
            <person name="Szafranski K."/>
            <person name="Xu Q."/>
            <person name="Tunggal B."/>
            <person name="Kummerfeld S."/>
            <person name="Madera M."/>
            <person name="Konfortov B.A."/>
            <person name="Rivero F."/>
            <person name="Bankier A.T."/>
            <person name="Lehmann R."/>
            <person name="Hamlin N."/>
            <person name="Davies R."/>
            <person name="Gaudet P."/>
            <person name="Fey P."/>
            <person name="Pilcher K."/>
            <person name="Chen G."/>
            <person name="Saunders D."/>
            <person name="Sodergren E.J."/>
            <person name="Davis P."/>
            <person name="Kerhornou A."/>
            <person name="Nie X."/>
            <person name="Hall N."/>
            <person name="Anjard C."/>
            <person name="Hemphill L."/>
            <person name="Bason N."/>
            <person name="Farbrother P."/>
            <person name="Desany B."/>
            <person name="Just E."/>
            <person name="Morio T."/>
            <person name="Rost R."/>
            <person name="Churcher C.M."/>
            <person name="Cooper J."/>
            <person name="Haydock S."/>
            <person name="van Driessche N."/>
            <person name="Cronin A."/>
            <person name="Goodhead I."/>
            <person name="Muzny D.M."/>
            <person name="Mourier T."/>
            <person name="Pain A."/>
            <person name="Lu M."/>
            <person name="Harper D."/>
            <person name="Lindsay R."/>
            <person name="Hauser H."/>
            <person name="James K.D."/>
            <person name="Quiles M."/>
            <person name="Madan Babu M."/>
            <person name="Saito T."/>
            <person name="Buchrieser C."/>
            <person name="Wardroper A."/>
            <person name="Felder M."/>
            <person name="Thangavelu M."/>
            <person name="Johnson D."/>
            <person name="Knights A."/>
            <person name="Loulseged H."/>
            <person name="Mungall K.L."/>
            <person name="Oliver K."/>
            <person name="Price C."/>
            <person name="Quail M.A."/>
            <person name="Urushihara H."/>
            <person name="Hernandez J."/>
            <person name="Rabbinowitsch E."/>
            <person name="Steffen D."/>
            <person name="Sanders M."/>
            <person name="Ma J."/>
            <person name="Kohara Y."/>
            <person name="Sharp S."/>
            <person name="Simmonds M.N."/>
            <person name="Spiegler S."/>
            <person name="Tivey A."/>
            <person name="Sugano S."/>
            <person name="White B."/>
            <person name="Walker D."/>
            <person name="Woodward J.R."/>
            <person name="Winckler T."/>
            <person name="Tanaka Y."/>
            <person name="Shaulsky G."/>
            <person name="Schleicher M."/>
            <person name="Weinstock G.M."/>
            <person name="Rosenthal A."/>
            <person name="Cox E.C."/>
            <person name="Chisholm R.L."/>
            <person name="Gibbs R.A."/>
            <person name="Loomis W.F."/>
            <person name="Platzer M."/>
            <person name="Kay R.R."/>
            <person name="Williams J.G."/>
            <person name="Dear P.H."/>
            <person name="Noegel A.A."/>
            <person name="Barrell B.G."/>
            <person name="Kuspa A."/>
        </authorList>
    </citation>
    <scope>NUCLEOTIDE SEQUENCE [LARGE SCALE GENOMIC DNA]</scope>
    <source>
        <strain>AX4</strain>
    </source>
</reference>
<gene>
    <name type="primary">mpl3</name>
    <name type="ORF">DDB_G0278445</name>
</gene>
<sequence>MGNSHSSENGGNSGSGGGSGGGGSGYSGVSENMIIDLEGRYHIDYKNRNYKKLKPQMFSTFFEHYEIVQADSLINSDFIKNKTVKKNRDNSSNNNSNNNSNNNNNNNTLNNSTIITTTTTTTTTSTPTTTIMITPPQQQQQQRTSLDLTNRDISESSTPNEQQIRLAQEETENQEIVESSFLKSSPVPSPSSSVLKSFESDFQLNTDLTTETFDDNSAEKKRQQQQQQQQNEDSKQSSQQQTQKSKDKDESAKIVNNKSSSTTNIKPILAAAQTSRSTSIPAFNRNKTKEPTKQKIKKEHSTLRKNSLSSSNIITPNNTTNTNAKDGASYFNENSLMSVKSDIKIFSLDLSINRLENITNDILSIMARFEIQELTLSTNFFQIIPDLQLVKSLTTVNLTRNKLSKLQTSVFIELPSLTSLILDRNFISSIPDDIDQIKNLKYLSIKHNALEYLPNSLSNLSQLISLDLSQNKLKTLPPNFDDLINLRMVWLSYNQITSLPSMRKLVNLVTFDISSNKLLSLPKDFAYLVPSRIKQSYSDIDIDEYDENINTCNNINSNNNDSNNSNNNNNNNNDNNNNCNKNNILEMINSTELEGGGLGCLKELNIRDNRELISLPVEYKQVESLMTLVTSIPSEIIPGIFLGGLDSANNAPILQTLGITHILLAIGDCEPFFPKTFKYYSIDDARDAPQYDISQHFEQTNCFIESGRKSGGVLVHCRAGISRSSTLVISYLMKYQRMTFKQAMDLVQSKRPQIQPNPGFKDQLLKYEAKLFCTNILNISSHNSNNKNNNSSNNRKSINNRKSNNIIITINNSSNSNNNNSTDNSNNSSTSTTPNLSSLSSDSSSSASLSKLSISK</sequence>
<dbReference type="EC" id="3.1.3.16"/>
<dbReference type="EC" id="3.1.3.48"/>
<dbReference type="EMBL" id="AAFI02000023">
    <property type="protein sequence ID" value="EAL68395.1"/>
    <property type="molecule type" value="Genomic_DNA"/>
</dbReference>
<dbReference type="RefSeq" id="XP_642370.1">
    <property type="nucleotide sequence ID" value="XM_637278.1"/>
</dbReference>
<dbReference type="SMR" id="Q54Y32"/>
<dbReference type="FunCoup" id="Q54Y32">
    <property type="interactions" value="630"/>
</dbReference>
<dbReference type="STRING" id="44689.Q54Y32"/>
<dbReference type="GlyGen" id="Q54Y32">
    <property type="glycosylation" value="1 site"/>
</dbReference>
<dbReference type="PaxDb" id="44689-DDB0238874"/>
<dbReference type="EnsemblProtists" id="EAL68395">
    <property type="protein sequence ID" value="EAL68395"/>
    <property type="gene ID" value="DDB_G0278445"/>
</dbReference>
<dbReference type="GeneID" id="8621575"/>
<dbReference type="KEGG" id="ddi:DDB_G0278445"/>
<dbReference type="dictyBase" id="DDB_G0278445">
    <property type="gene designation" value="mpl3"/>
</dbReference>
<dbReference type="VEuPathDB" id="AmoebaDB:DDB_G0278445"/>
<dbReference type="eggNOG" id="KOG0619">
    <property type="taxonomic scope" value="Eukaryota"/>
</dbReference>
<dbReference type="eggNOG" id="KOG1716">
    <property type="taxonomic scope" value="Eukaryota"/>
</dbReference>
<dbReference type="HOGENOM" id="CLU_333851_0_0_1"/>
<dbReference type="InParanoid" id="Q54Y32"/>
<dbReference type="OMA" id="RDTPNYD"/>
<dbReference type="Reactome" id="R-DDI-112409">
    <property type="pathway name" value="RAF-independent MAPK1/3 activation"/>
</dbReference>
<dbReference type="Reactome" id="R-DDI-202670">
    <property type="pathway name" value="ERKs are inactivated"/>
</dbReference>
<dbReference type="Reactome" id="R-DDI-5675221">
    <property type="pathway name" value="Negative regulation of MAPK pathway"/>
</dbReference>
<dbReference type="PRO" id="PR:Q54Y32"/>
<dbReference type="Proteomes" id="UP000002195">
    <property type="component" value="Chromosome 3"/>
</dbReference>
<dbReference type="GO" id="GO:0005737">
    <property type="term" value="C:cytoplasm"/>
    <property type="evidence" value="ECO:0000318"/>
    <property type="project" value="GO_Central"/>
</dbReference>
<dbReference type="GO" id="GO:0004721">
    <property type="term" value="F:phosphoprotein phosphatase activity"/>
    <property type="evidence" value="ECO:0000318"/>
    <property type="project" value="GO_Central"/>
</dbReference>
<dbReference type="GO" id="GO:0004722">
    <property type="term" value="F:protein serine/threonine phosphatase activity"/>
    <property type="evidence" value="ECO:0007669"/>
    <property type="project" value="UniProtKB-EC"/>
</dbReference>
<dbReference type="GO" id="GO:0004725">
    <property type="term" value="F:protein tyrosine phosphatase activity"/>
    <property type="evidence" value="ECO:0007669"/>
    <property type="project" value="UniProtKB-EC"/>
</dbReference>
<dbReference type="GO" id="GO:0043409">
    <property type="term" value="P:negative regulation of MAPK cascade"/>
    <property type="evidence" value="ECO:0000318"/>
    <property type="project" value="GO_Central"/>
</dbReference>
<dbReference type="GO" id="GO:0007165">
    <property type="term" value="P:signal transduction"/>
    <property type="evidence" value="ECO:0000318"/>
    <property type="project" value="GO_Central"/>
</dbReference>
<dbReference type="CDD" id="cd14498">
    <property type="entry name" value="DSP"/>
    <property type="match status" value="1"/>
</dbReference>
<dbReference type="FunFam" id="3.90.190.10:FF:000133">
    <property type="entry name" value="Leucine rich repeat and phosphatase domain containing protein"/>
    <property type="match status" value="1"/>
</dbReference>
<dbReference type="FunFam" id="3.80.10.10:FF:001682">
    <property type="entry name" value="MAP kinase phosphatase with leucine-rich repeats protein 3"/>
    <property type="match status" value="1"/>
</dbReference>
<dbReference type="Gene3D" id="3.90.190.10">
    <property type="entry name" value="Protein tyrosine phosphatase superfamily"/>
    <property type="match status" value="1"/>
</dbReference>
<dbReference type="Gene3D" id="3.80.10.10">
    <property type="entry name" value="Ribonuclease Inhibitor"/>
    <property type="match status" value="2"/>
</dbReference>
<dbReference type="InterPro" id="IPR000340">
    <property type="entry name" value="Dual-sp_phosphatase_cat-dom"/>
</dbReference>
<dbReference type="InterPro" id="IPR001611">
    <property type="entry name" value="Leu-rich_rpt"/>
</dbReference>
<dbReference type="InterPro" id="IPR025875">
    <property type="entry name" value="Leu-rich_rpt_4"/>
</dbReference>
<dbReference type="InterPro" id="IPR003591">
    <property type="entry name" value="Leu-rich_rpt_typical-subtyp"/>
</dbReference>
<dbReference type="InterPro" id="IPR032675">
    <property type="entry name" value="LRR_dom_sf"/>
</dbReference>
<dbReference type="InterPro" id="IPR029021">
    <property type="entry name" value="Prot-tyrosine_phosphatase-like"/>
</dbReference>
<dbReference type="InterPro" id="IPR016130">
    <property type="entry name" value="Tyr_Pase_AS"/>
</dbReference>
<dbReference type="InterPro" id="IPR003595">
    <property type="entry name" value="Tyr_Pase_cat"/>
</dbReference>
<dbReference type="InterPro" id="IPR000387">
    <property type="entry name" value="Tyr_Pase_dom"/>
</dbReference>
<dbReference type="InterPro" id="IPR020422">
    <property type="entry name" value="TYR_PHOSPHATASE_DUAL_dom"/>
</dbReference>
<dbReference type="PANTHER" id="PTHR10159">
    <property type="entry name" value="DUAL SPECIFICITY PROTEIN PHOSPHATASE"/>
    <property type="match status" value="1"/>
</dbReference>
<dbReference type="PANTHER" id="PTHR10159:SF525">
    <property type="entry name" value="MAP KINASE PHOSPHATASE WITH LEUCINE-RICH REPEATS PROTEIN 3"/>
    <property type="match status" value="1"/>
</dbReference>
<dbReference type="Pfam" id="PF00782">
    <property type="entry name" value="DSPc"/>
    <property type="match status" value="1"/>
</dbReference>
<dbReference type="Pfam" id="PF00560">
    <property type="entry name" value="LRR_1"/>
    <property type="match status" value="1"/>
</dbReference>
<dbReference type="Pfam" id="PF12799">
    <property type="entry name" value="LRR_4"/>
    <property type="match status" value="1"/>
</dbReference>
<dbReference type="Pfam" id="PF13855">
    <property type="entry name" value="LRR_8"/>
    <property type="match status" value="1"/>
</dbReference>
<dbReference type="SMART" id="SM00195">
    <property type="entry name" value="DSPc"/>
    <property type="match status" value="1"/>
</dbReference>
<dbReference type="SMART" id="SM00369">
    <property type="entry name" value="LRR_TYP"/>
    <property type="match status" value="6"/>
</dbReference>
<dbReference type="SMART" id="SM00404">
    <property type="entry name" value="PTPc_motif"/>
    <property type="match status" value="1"/>
</dbReference>
<dbReference type="SUPFAM" id="SSF52799">
    <property type="entry name" value="(Phosphotyrosine protein) phosphatases II"/>
    <property type="match status" value="1"/>
</dbReference>
<dbReference type="SUPFAM" id="SSF52058">
    <property type="entry name" value="L domain-like"/>
    <property type="match status" value="1"/>
</dbReference>
<dbReference type="PROSITE" id="PS51450">
    <property type="entry name" value="LRR"/>
    <property type="match status" value="9"/>
</dbReference>
<dbReference type="PROSITE" id="PS00383">
    <property type="entry name" value="TYR_PHOSPHATASE_1"/>
    <property type="match status" value="1"/>
</dbReference>
<dbReference type="PROSITE" id="PS50056">
    <property type="entry name" value="TYR_PHOSPHATASE_2"/>
    <property type="match status" value="1"/>
</dbReference>
<dbReference type="PROSITE" id="PS50054">
    <property type="entry name" value="TYR_PHOSPHATASE_DUAL"/>
    <property type="match status" value="1"/>
</dbReference>
<proteinExistence type="inferred from homology"/>
<evidence type="ECO:0000250" key="1"/>
<evidence type="ECO:0000255" key="2"/>
<evidence type="ECO:0000255" key="3">
    <source>
        <dbReference type="PROSITE-ProRule" id="PRU00160"/>
    </source>
</evidence>
<evidence type="ECO:0000255" key="4">
    <source>
        <dbReference type="PROSITE-ProRule" id="PRU10044"/>
    </source>
</evidence>
<evidence type="ECO:0000256" key="5">
    <source>
        <dbReference type="SAM" id="MobiDB-lite"/>
    </source>
</evidence>
<evidence type="ECO:0000305" key="6"/>
<organism>
    <name type="scientific">Dictyostelium discoideum</name>
    <name type="common">Social amoeba</name>
    <dbReference type="NCBI Taxonomy" id="44689"/>
    <lineage>
        <taxon>Eukaryota</taxon>
        <taxon>Amoebozoa</taxon>
        <taxon>Evosea</taxon>
        <taxon>Eumycetozoa</taxon>
        <taxon>Dictyostelia</taxon>
        <taxon>Dictyosteliales</taxon>
        <taxon>Dictyosteliaceae</taxon>
        <taxon>Dictyostelium</taxon>
    </lineage>
</organism>
<accession>Q54Y32</accession>
<keyword id="KW-0378">Hydrolase</keyword>
<keyword id="KW-0433">Leucine-rich repeat</keyword>
<keyword id="KW-0449">Lipoprotein</keyword>
<keyword id="KW-0519">Myristate</keyword>
<keyword id="KW-0904">Protein phosphatase</keyword>
<keyword id="KW-1185">Reference proteome</keyword>
<keyword id="KW-0677">Repeat</keyword>
<feature type="initiator methionine" description="Removed" evidence="2">
    <location>
        <position position="1"/>
    </location>
</feature>
<feature type="chain" id="PRO_0000332957" description="MAP kinase phosphatase with leucine-rich repeats protein 3">
    <location>
        <begin position="2"/>
        <end position="856"/>
    </location>
</feature>
<feature type="repeat" description="LRR 1">
    <location>
        <begin position="344"/>
        <end position="365"/>
    </location>
</feature>
<feature type="repeat" description="LRR 2">
    <location>
        <begin position="370"/>
        <end position="391"/>
    </location>
</feature>
<feature type="repeat" description="LRR 3">
    <location>
        <begin position="392"/>
        <end position="413"/>
    </location>
</feature>
<feature type="repeat" description="LRR 4">
    <location>
        <begin position="416"/>
        <end position="437"/>
    </location>
</feature>
<feature type="repeat" description="LRR 5">
    <location>
        <begin position="439"/>
        <end position="461"/>
    </location>
</feature>
<feature type="repeat" description="LRR 6">
    <location>
        <begin position="462"/>
        <end position="484"/>
    </location>
</feature>
<feature type="repeat" description="LRR 7">
    <location>
        <begin position="485"/>
        <end position="506"/>
    </location>
</feature>
<feature type="repeat" description="LRR 8">
    <location>
        <begin position="507"/>
        <end position="528"/>
    </location>
</feature>
<feature type="domain" description="Tyrosine-protein phosphatase" evidence="3">
    <location>
        <begin position="632"/>
        <end position="773"/>
    </location>
</feature>
<feature type="region of interest" description="Disordered" evidence="5">
    <location>
        <begin position="1"/>
        <end position="24"/>
    </location>
</feature>
<feature type="region of interest" description="Disordered" evidence="5">
    <location>
        <begin position="84"/>
        <end position="195"/>
    </location>
</feature>
<feature type="region of interest" description="Disordered" evidence="5">
    <location>
        <begin position="214"/>
        <end position="326"/>
    </location>
</feature>
<feature type="region of interest" description="Disordered" evidence="5">
    <location>
        <begin position="554"/>
        <end position="577"/>
    </location>
</feature>
<feature type="region of interest" description="Disordered" evidence="5">
    <location>
        <begin position="810"/>
        <end position="856"/>
    </location>
</feature>
<feature type="compositionally biased region" description="Low complexity" evidence="5">
    <location>
        <begin position="1"/>
        <end position="10"/>
    </location>
</feature>
<feature type="compositionally biased region" description="Gly residues" evidence="5">
    <location>
        <begin position="11"/>
        <end position="24"/>
    </location>
</feature>
<feature type="compositionally biased region" description="Low complexity" evidence="5">
    <location>
        <begin position="90"/>
        <end position="142"/>
    </location>
</feature>
<feature type="compositionally biased region" description="Polar residues" evidence="5">
    <location>
        <begin position="155"/>
        <end position="165"/>
    </location>
</feature>
<feature type="compositionally biased region" description="Low complexity" evidence="5">
    <location>
        <begin position="178"/>
        <end position="195"/>
    </location>
</feature>
<feature type="compositionally biased region" description="Low complexity" evidence="5">
    <location>
        <begin position="224"/>
        <end position="243"/>
    </location>
</feature>
<feature type="compositionally biased region" description="Polar residues" evidence="5">
    <location>
        <begin position="254"/>
        <end position="265"/>
    </location>
</feature>
<feature type="compositionally biased region" description="Polar residues" evidence="5">
    <location>
        <begin position="272"/>
        <end position="281"/>
    </location>
</feature>
<feature type="compositionally biased region" description="Low complexity" evidence="5">
    <location>
        <begin position="306"/>
        <end position="323"/>
    </location>
</feature>
<feature type="active site" description="Phosphocysteine intermediate" evidence="3">
    <location>
        <position position="717"/>
    </location>
</feature>
<feature type="lipid moiety-binding region" description="N-myristoyl glycine" evidence="2">
    <location>
        <position position="2"/>
    </location>
</feature>